<evidence type="ECO:0000255" key="1">
    <source>
        <dbReference type="HAMAP-Rule" id="MF_00300"/>
    </source>
</evidence>
<comment type="function">
    <text evidence="1">Catalyzes the anti-1,4-elimination of the C-3 phosphate and the C-6 proR hydrogen from 5-enolpyruvylshikimate-3-phosphate (EPSP) to yield chorismate, which is the branch point compound that serves as the starting substrate for the three terminal pathways of aromatic amino acid biosynthesis. This reaction introduces a second double bond into the aromatic ring system.</text>
</comment>
<comment type="catalytic activity">
    <reaction evidence="1">
        <text>5-O-(1-carboxyvinyl)-3-phosphoshikimate = chorismate + phosphate</text>
        <dbReference type="Rhea" id="RHEA:21020"/>
        <dbReference type="ChEBI" id="CHEBI:29748"/>
        <dbReference type="ChEBI" id="CHEBI:43474"/>
        <dbReference type="ChEBI" id="CHEBI:57701"/>
        <dbReference type="EC" id="4.2.3.5"/>
    </reaction>
</comment>
<comment type="cofactor">
    <cofactor evidence="1">
        <name>FMNH2</name>
        <dbReference type="ChEBI" id="CHEBI:57618"/>
    </cofactor>
    <text evidence="1">Reduced FMN (FMNH(2)).</text>
</comment>
<comment type="pathway">
    <text evidence="1">Metabolic intermediate biosynthesis; chorismate biosynthesis; chorismate from D-erythrose 4-phosphate and phosphoenolpyruvate: step 7/7.</text>
</comment>
<comment type="subunit">
    <text evidence="1">Homotetramer.</text>
</comment>
<comment type="similarity">
    <text evidence="1">Belongs to the chorismate synthase family.</text>
</comment>
<accession>A4SXH9</accession>
<gene>
    <name evidence="1" type="primary">aroC</name>
    <name type="ordered locus">Pnuc_0977</name>
</gene>
<sequence>MSGNTLGLLFTVTTFGESHGPAIGAVVDGCPPGMTLSEADIQADLDRRKPGTSRHVTQRKEEDKVEILSGVFEGKTTGAPIGLLIRNTDQRSQDYGDILQTFRPGHADYAYHYKYGFRDPRGGGRSSARLTAPVVAAAAIAKKWLKEHYGTEFYGYMGQLGEIEVPFQDKKHIAENPFFAANSEIIPQLEGYMDELRKAGDSCGARIEVRASNVPIGLGEPLFDKLDADIAHAMMGINAVKGVEIGAGFKSVSQRGSVHGDDLHPDGFASNNSGGTLGGISSGQELRVAIAIKPTSSIMTPKHSVDIKGQPITVQTKGRHDPCVGIRATPIAEAMLALVLMDHALRHRAQCGDVELAVPPIPASRPGSQLD</sequence>
<protein>
    <recommendedName>
        <fullName evidence="1">Chorismate synthase</fullName>
        <shortName evidence="1">CS</shortName>
        <ecNumber evidence="1">4.2.3.5</ecNumber>
    </recommendedName>
    <alternativeName>
        <fullName evidence="1">5-enolpyruvylshikimate-3-phosphate phospholyase</fullName>
    </alternativeName>
</protein>
<reference key="1">
    <citation type="journal article" date="2012" name="Stand. Genomic Sci.">
        <title>Complete genome sequence of Polynucleobacter necessarius subsp. asymbioticus type strain (QLW-P1DMWA-1(T)).</title>
        <authorList>
            <person name="Meincke L."/>
            <person name="Copeland A."/>
            <person name="Lapidus A."/>
            <person name="Lucas S."/>
            <person name="Berry K.W."/>
            <person name="Del Rio T.G."/>
            <person name="Hammon N."/>
            <person name="Dalin E."/>
            <person name="Tice H."/>
            <person name="Pitluck S."/>
            <person name="Richardson P."/>
            <person name="Bruce D."/>
            <person name="Goodwin L."/>
            <person name="Han C."/>
            <person name="Tapia R."/>
            <person name="Detter J.C."/>
            <person name="Schmutz J."/>
            <person name="Brettin T."/>
            <person name="Larimer F."/>
            <person name="Land M."/>
            <person name="Hauser L."/>
            <person name="Kyrpides N.C."/>
            <person name="Ivanova N."/>
            <person name="Goker M."/>
            <person name="Woyke T."/>
            <person name="Wu Q.L."/>
            <person name="Pockl M."/>
            <person name="Hahn M.W."/>
            <person name="Klenk H.P."/>
        </authorList>
    </citation>
    <scope>NUCLEOTIDE SEQUENCE [LARGE SCALE GENOMIC DNA]</scope>
    <source>
        <strain>DSM 18221 / CIP 109841 / QLW-P1DMWA-1</strain>
    </source>
</reference>
<feature type="chain" id="PRO_1000079002" description="Chorismate synthase">
    <location>
        <begin position="1"/>
        <end position="371"/>
    </location>
</feature>
<feature type="binding site" evidence="1">
    <location>
        <position position="48"/>
    </location>
    <ligand>
        <name>NADP(+)</name>
        <dbReference type="ChEBI" id="CHEBI:58349"/>
    </ligand>
</feature>
<feature type="binding site" evidence="1">
    <location>
        <position position="54"/>
    </location>
    <ligand>
        <name>NADP(+)</name>
        <dbReference type="ChEBI" id="CHEBI:58349"/>
    </ligand>
</feature>
<feature type="binding site" evidence="1">
    <location>
        <begin position="125"/>
        <end position="127"/>
    </location>
    <ligand>
        <name>FMN</name>
        <dbReference type="ChEBI" id="CHEBI:58210"/>
    </ligand>
</feature>
<feature type="binding site" evidence="1">
    <location>
        <begin position="238"/>
        <end position="239"/>
    </location>
    <ligand>
        <name>FMN</name>
        <dbReference type="ChEBI" id="CHEBI:58210"/>
    </ligand>
</feature>
<feature type="binding site" evidence="1">
    <location>
        <position position="278"/>
    </location>
    <ligand>
        <name>FMN</name>
        <dbReference type="ChEBI" id="CHEBI:58210"/>
    </ligand>
</feature>
<feature type="binding site" evidence="1">
    <location>
        <begin position="293"/>
        <end position="297"/>
    </location>
    <ligand>
        <name>FMN</name>
        <dbReference type="ChEBI" id="CHEBI:58210"/>
    </ligand>
</feature>
<feature type="binding site" evidence="1">
    <location>
        <position position="319"/>
    </location>
    <ligand>
        <name>FMN</name>
        <dbReference type="ChEBI" id="CHEBI:58210"/>
    </ligand>
</feature>
<keyword id="KW-0028">Amino-acid biosynthesis</keyword>
<keyword id="KW-0057">Aromatic amino acid biosynthesis</keyword>
<keyword id="KW-0274">FAD</keyword>
<keyword id="KW-0285">Flavoprotein</keyword>
<keyword id="KW-0288">FMN</keyword>
<keyword id="KW-0456">Lyase</keyword>
<keyword id="KW-0521">NADP</keyword>
<keyword id="KW-1185">Reference proteome</keyword>
<dbReference type="EC" id="4.2.3.5" evidence="1"/>
<dbReference type="EMBL" id="CP000655">
    <property type="protein sequence ID" value="ABP34193.1"/>
    <property type="molecule type" value="Genomic_DNA"/>
</dbReference>
<dbReference type="RefSeq" id="WP_011902818.1">
    <property type="nucleotide sequence ID" value="NC_009379.1"/>
</dbReference>
<dbReference type="SMR" id="A4SXH9"/>
<dbReference type="GeneID" id="31481348"/>
<dbReference type="KEGG" id="pnu:Pnuc_0977"/>
<dbReference type="eggNOG" id="COG0082">
    <property type="taxonomic scope" value="Bacteria"/>
</dbReference>
<dbReference type="HOGENOM" id="CLU_034547_0_2_4"/>
<dbReference type="UniPathway" id="UPA00053">
    <property type="reaction ID" value="UER00090"/>
</dbReference>
<dbReference type="Proteomes" id="UP000000231">
    <property type="component" value="Chromosome"/>
</dbReference>
<dbReference type="GO" id="GO:0005829">
    <property type="term" value="C:cytosol"/>
    <property type="evidence" value="ECO:0007669"/>
    <property type="project" value="TreeGrafter"/>
</dbReference>
<dbReference type="GO" id="GO:0004107">
    <property type="term" value="F:chorismate synthase activity"/>
    <property type="evidence" value="ECO:0007669"/>
    <property type="project" value="UniProtKB-UniRule"/>
</dbReference>
<dbReference type="GO" id="GO:0010181">
    <property type="term" value="F:FMN binding"/>
    <property type="evidence" value="ECO:0007669"/>
    <property type="project" value="TreeGrafter"/>
</dbReference>
<dbReference type="GO" id="GO:0008652">
    <property type="term" value="P:amino acid biosynthetic process"/>
    <property type="evidence" value="ECO:0007669"/>
    <property type="project" value="UniProtKB-KW"/>
</dbReference>
<dbReference type="GO" id="GO:0009073">
    <property type="term" value="P:aromatic amino acid family biosynthetic process"/>
    <property type="evidence" value="ECO:0007669"/>
    <property type="project" value="UniProtKB-KW"/>
</dbReference>
<dbReference type="GO" id="GO:0009423">
    <property type="term" value="P:chorismate biosynthetic process"/>
    <property type="evidence" value="ECO:0007669"/>
    <property type="project" value="UniProtKB-UniRule"/>
</dbReference>
<dbReference type="CDD" id="cd07304">
    <property type="entry name" value="Chorismate_synthase"/>
    <property type="match status" value="1"/>
</dbReference>
<dbReference type="Gene3D" id="3.60.150.10">
    <property type="entry name" value="Chorismate synthase AroC"/>
    <property type="match status" value="1"/>
</dbReference>
<dbReference type="HAMAP" id="MF_00300">
    <property type="entry name" value="Chorismate_synth"/>
    <property type="match status" value="1"/>
</dbReference>
<dbReference type="InterPro" id="IPR000453">
    <property type="entry name" value="Chorismate_synth"/>
</dbReference>
<dbReference type="InterPro" id="IPR035904">
    <property type="entry name" value="Chorismate_synth_AroC_sf"/>
</dbReference>
<dbReference type="InterPro" id="IPR020541">
    <property type="entry name" value="Chorismate_synthase_CS"/>
</dbReference>
<dbReference type="NCBIfam" id="TIGR00033">
    <property type="entry name" value="aroC"/>
    <property type="match status" value="1"/>
</dbReference>
<dbReference type="NCBIfam" id="NF003793">
    <property type="entry name" value="PRK05382.1"/>
    <property type="match status" value="1"/>
</dbReference>
<dbReference type="PANTHER" id="PTHR21085">
    <property type="entry name" value="CHORISMATE SYNTHASE"/>
    <property type="match status" value="1"/>
</dbReference>
<dbReference type="PANTHER" id="PTHR21085:SF0">
    <property type="entry name" value="CHORISMATE SYNTHASE"/>
    <property type="match status" value="1"/>
</dbReference>
<dbReference type="Pfam" id="PF01264">
    <property type="entry name" value="Chorismate_synt"/>
    <property type="match status" value="1"/>
</dbReference>
<dbReference type="PIRSF" id="PIRSF001456">
    <property type="entry name" value="Chorismate_synth"/>
    <property type="match status" value="1"/>
</dbReference>
<dbReference type="SUPFAM" id="SSF103263">
    <property type="entry name" value="Chorismate synthase, AroC"/>
    <property type="match status" value="1"/>
</dbReference>
<dbReference type="PROSITE" id="PS00787">
    <property type="entry name" value="CHORISMATE_SYNTHASE_1"/>
    <property type="match status" value="1"/>
</dbReference>
<dbReference type="PROSITE" id="PS00788">
    <property type="entry name" value="CHORISMATE_SYNTHASE_2"/>
    <property type="match status" value="1"/>
</dbReference>
<dbReference type="PROSITE" id="PS00789">
    <property type="entry name" value="CHORISMATE_SYNTHASE_3"/>
    <property type="match status" value="1"/>
</dbReference>
<name>AROC_POLAQ</name>
<proteinExistence type="inferred from homology"/>
<organism>
    <name type="scientific">Polynucleobacter asymbioticus (strain DSM 18221 / CIP 109841 / QLW-P1DMWA-1)</name>
    <name type="common">Polynucleobacter necessarius subsp. asymbioticus</name>
    <dbReference type="NCBI Taxonomy" id="312153"/>
    <lineage>
        <taxon>Bacteria</taxon>
        <taxon>Pseudomonadati</taxon>
        <taxon>Pseudomonadota</taxon>
        <taxon>Betaproteobacteria</taxon>
        <taxon>Burkholderiales</taxon>
        <taxon>Burkholderiaceae</taxon>
        <taxon>Polynucleobacter</taxon>
    </lineage>
</organism>